<accession>Q9SI06</accession>
<accession>F4IV71</accession>
<keyword id="KW-0067">ATP-binding</keyword>
<keyword id="KW-1003">Cell membrane</keyword>
<keyword id="KW-0325">Glycoprotein</keyword>
<keyword id="KW-0418">Kinase</keyword>
<keyword id="KW-0433">Leucine-rich repeat</keyword>
<keyword id="KW-0472">Membrane</keyword>
<keyword id="KW-0547">Nucleotide-binding</keyword>
<keyword id="KW-0597">Phosphoprotein</keyword>
<keyword id="KW-0675">Receptor</keyword>
<keyword id="KW-1185">Reference proteome</keyword>
<keyword id="KW-0677">Repeat</keyword>
<keyword id="KW-0723">Serine/threonine-protein kinase</keyword>
<keyword id="KW-0732">Signal</keyword>
<keyword id="KW-0808">Transferase</keyword>
<keyword id="KW-0812">Transmembrane</keyword>
<keyword id="KW-1133">Transmembrane helix</keyword>
<organism>
    <name type="scientific">Arabidopsis thaliana</name>
    <name type="common">Mouse-ear cress</name>
    <dbReference type="NCBI Taxonomy" id="3702"/>
    <lineage>
        <taxon>Eukaryota</taxon>
        <taxon>Viridiplantae</taxon>
        <taxon>Streptophyta</taxon>
        <taxon>Embryophyta</taxon>
        <taxon>Tracheophyta</taxon>
        <taxon>Spermatophyta</taxon>
        <taxon>Magnoliopsida</taxon>
        <taxon>eudicotyledons</taxon>
        <taxon>Gunneridae</taxon>
        <taxon>Pentapetalae</taxon>
        <taxon>rosids</taxon>
        <taxon>malvids</taxon>
        <taxon>Brassicales</taxon>
        <taxon>Brassicaceae</taxon>
        <taxon>Camelineae</taxon>
        <taxon>Arabidopsis</taxon>
    </lineage>
</organism>
<proteinExistence type="inferred from homology"/>
<feature type="signal peptide" evidence="3">
    <location>
        <begin position="1"/>
        <end position="26"/>
    </location>
</feature>
<feature type="chain" id="PRO_0000403328" description="Putative leucine-rich repeat receptor-like serine/threonine-protein kinase At2g04300">
    <location>
        <begin position="27"/>
        <end position="892"/>
    </location>
</feature>
<feature type="topological domain" description="Extracellular" evidence="3">
    <location>
        <begin position="27"/>
        <end position="523"/>
    </location>
</feature>
<feature type="transmembrane region" description="Helical" evidence="3">
    <location>
        <begin position="524"/>
        <end position="544"/>
    </location>
</feature>
<feature type="topological domain" description="Cytoplasmic" evidence="3">
    <location>
        <begin position="545"/>
        <end position="892"/>
    </location>
</feature>
<feature type="repeat" description="LRR 1">
    <location>
        <begin position="375"/>
        <end position="396"/>
    </location>
</feature>
<feature type="repeat" description="LRR 2">
    <location>
        <begin position="399"/>
        <end position="422"/>
    </location>
</feature>
<feature type="repeat" description="LRR 3">
    <location>
        <begin position="423"/>
        <end position="444"/>
    </location>
</feature>
<feature type="repeat" description="LRR 4">
    <location>
        <begin position="447"/>
        <end position="467"/>
    </location>
</feature>
<feature type="domain" description="Protein kinase" evidence="4">
    <location>
        <begin position="582"/>
        <end position="855"/>
    </location>
</feature>
<feature type="active site" description="Proton acceptor" evidence="4 5">
    <location>
        <position position="707"/>
    </location>
</feature>
<feature type="binding site" evidence="4">
    <location>
        <begin position="588"/>
        <end position="596"/>
    </location>
    <ligand>
        <name>ATP</name>
        <dbReference type="ChEBI" id="CHEBI:30616"/>
    </ligand>
</feature>
<feature type="binding site" evidence="4">
    <location>
        <position position="610"/>
    </location>
    <ligand>
        <name>ATP</name>
        <dbReference type="ChEBI" id="CHEBI:30616"/>
    </ligand>
</feature>
<feature type="modified residue" description="Phosphothreonine" evidence="2">
    <location>
        <position position="573"/>
    </location>
</feature>
<feature type="modified residue" description="Phosphotyrosine" evidence="2">
    <location>
        <position position="655"/>
    </location>
</feature>
<feature type="modified residue" description="Phosphothreonine" evidence="2">
    <location>
        <position position="742"/>
    </location>
</feature>
<feature type="modified residue" description="Phosphothreonine" evidence="2">
    <location>
        <position position="747"/>
    </location>
</feature>
<feature type="modified residue" description="Phosphotyrosine" evidence="2">
    <location>
        <position position="755"/>
    </location>
</feature>
<feature type="glycosylation site" description="N-linked (GlcNAc...) asparagine" evidence="3">
    <location>
        <position position="99"/>
    </location>
</feature>
<feature type="glycosylation site" description="N-linked (GlcNAc...) asparagine" evidence="3">
    <location>
        <position position="186"/>
    </location>
</feature>
<feature type="glycosylation site" description="N-linked (GlcNAc...) asparagine" evidence="3">
    <location>
        <position position="241"/>
    </location>
</feature>
<feature type="glycosylation site" description="N-linked (GlcNAc...) asparagine" evidence="3">
    <location>
        <position position="267"/>
    </location>
</feature>
<feature type="glycosylation site" description="N-linked (GlcNAc...) asparagine" evidence="3">
    <location>
        <position position="294"/>
    </location>
</feature>
<feature type="glycosylation site" description="N-linked (GlcNAc...) asparagine" evidence="3">
    <location>
        <position position="407"/>
    </location>
</feature>
<feature type="glycosylation site" description="N-linked (GlcNAc...) asparagine" evidence="3">
    <location>
        <position position="421"/>
    </location>
</feature>
<feature type="glycosylation site" description="N-linked (GlcNAc...) asparagine" evidence="3">
    <location>
        <position position="437"/>
    </location>
</feature>
<feature type="glycosylation site" description="N-linked (GlcNAc...) asparagine" evidence="3">
    <location>
        <position position="450"/>
    </location>
</feature>
<feature type="glycosylation site" description="N-linked (GlcNAc...) asparagine" evidence="3">
    <location>
        <position position="469"/>
    </location>
</feature>
<protein>
    <recommendedName>
        <fullName>Putative leucine-rich repeat receptor-like serine/threonine-protein kinase At2g04300</fullName>
        <ecNumber>2.7.11.1</ecNumber>
    </recommendedName>
</protein>
<evidence type="ECO:0000250" key="1"/>
<evidence type="ECO:0000250" key="2">
    <source>
        <dbReference type="UniProtKB" id="O48814"/>
    </source>
</evidence>
<evidence type="ECO:0000255" key="3"/>
<evidence type="ECO:0000255" key="4">
    <source>
        <dbReference type="PROSITE-ProRule" id="PRU00159"/>
    </source>
</evidence>
<evidence type="ECO:0000255" key="5">
    <source>
        <dbReference type="PROSITE-ProRule" id="PRU10027"/>
    </source>
</evidence>
<evidence type="ECO:0000305" key="6"/>
<name>Y5573_ARATH</name>
<gene>
    <name type="ordered locus">At2g04300</name>
    <name type="ORF">T23O15.8</name>
</gene>
<sequence>MKTHPQAILLCVLFFITFGLLHVVEAGNQEGFISLDCGLSPNEPPYVDAATDLTYTTDNDFVQSGKTGTIDKELESTYNKPILQLRYFPEGVRNCYTLNVTLGTNYLIRASFVYGNYDGLNKELEFDLYLGPNLWANVNTAVYLMNGVTTEEIIHSTKSKVLQVCLIKTGESIPIINSLELRPLINDTYNTQSGSLKYLFRNYFSTSRRIIRYPNDVNDRHWYPFFDEDAWTELTTNLNVNSSNGYDPPKFVMASASTPISKNAPFNFTWSLIPSTAKFYSYMHFADIQTLQANETREFDMMLNGNLALERYRPKTFATGTIYFIKPQICEGGQCIIELLKTSKSTLPPLCSALEVFTVIDFPELETNQDDVIAIKNIQNTYGVSKTSWQGDPCVPKRFMWDGLNCNNSYISTPPTITFLNLSSSHLTGIIASAIQNLTHLQNLDLSNNNLTGGVPEFLAGLKSLLVINLSGNNLSGSVPQTLLQKKGLKLNLEGNIYLNCPDGSCVSKDGNGGAKKKNVVVLVVVSIALVVVLGSALALFLVFRKRKTPRNEVSRTSRSLDPTITTKNRRFTYSEVVKMTNNFEKILGKGGFGMVYHGTVNDAEQVAVKMLSPSSSQGYKEFKAEVELLLRVHHKNLVGLVGYCDEGENLSLIYEYMAKGDLKEHMLGNQGVSILDWKTRLKIVAESAQGLEYLHNGCKPPMVHRDVKTTNILLDEHFQAKLADFGLSRSFPLEGETRVDTVVAGTPGYLDPEYYRTNWLNEKSDVYSFGIVLLEIITNQHVINQSREKPHIAEWVGVMLTKGDIKSIIDPKFSGDYDAGSVWRAVELAMSCVNPSSTGRPTMSQVVIELNECLASENSRRGMSQNMESKGSIQYTEVSTNFGTEYTPEAR</sequence>
<reference key="1">
    <citation type="journal article" date="1999" name="Nature">
        <title>Sequence and analysis of chromosome 2 of the plant Arabidopsis thaliana.</title>
        <authorList>
            <person name="Lin X."/>
            <person name="Kaul S."/>
            <person name="Rounsley S.D."/>
            <person name="Shea T.P."/>
            <person name="Benito M.-I."/>
            <person name="Town C.D."/>
            <person name="Fujii C.Y."/>
            <person name="Mason T.M."/>
            <person name="Bowman C.L."/>
            <person name="Barnstead M.E."/>
            <person name="Feldblyum T.V."/>
            <person name="Buell C.R."/>
            <person name="Ketchum K.A."/>
            <person name="Lee J.J."/>
            <person name="Ronning C.M."/>
            <person name="Koo H.L."/>
            <person name="Moffat K.S."/>
            <person name="Cronin L.A."/>
            <person name="Shen M."/>
            <person name="Pai G."/>
            <person name="Van Aken S."/>
            <person name="Umayam L."/>
            <person name="Tallon L.J."/>
            <person name="Gill J.E."/>
            <person name="Adams M.D."/>
            <person name="Carrera A.J."/>
            <person name="Creasy T.H."/>
            <person name="Goodman H.M."/>
            <person name="Somerville C.R."/>
            <person name="Copenhaver G.P."/>
            <person name="Preuss D."/>
            <person name="Nierman W.C."/>
            <person name="White O."/>
            <person name="Eisen J.A."/>
            <person name="Salzberg S.L."/>
            <person name="Fraser C.M."/>
            <person name="Venter J.C."/>
        </authorList>
    </citation>
    <scope>NUCLEOTIDE SEQUENCE [LARGE SCALE GENOMIC DNA]</scope>
    <source>
        <strain>cv. Columbia</strain>
    </source>
</reference>
<reference key="2">
    <citation type="journal article" date="2017" name="Plant J.">
        <title>Araport11: a complete reannotation of the Arabidopsis thaliana reference genome.</title>
        <authorList>
            <person name="Cheng C.Y."/>
            <person name="Krishnakumar V."/>
            <person name="Chan A.P."/>
            <person name="Thibaud-Nissen F."/>
            <person name="Schobel S."/>
            <person name="Town C.D."/>
        </authorList>
    </citation>
    <scope>GENOME REANNOTATION</scope>
    <source>
        <strain>cv. Columbia</strain>
    </source>
</reference>
<comment type="catalytic activity">
    <reaction>
        <text>L-seryl-[protein] + ATP = O-phospho-L-seryl-[protein] + ADP + H(+)</text>
        <dbReference type="Rhea" id="RHEA:17989"/>
        <dbReference type="Rhea" id="RHEA-COMP:9863"/>
        <dbReference type="Rhea" id="RHEA-COMP:11604"/>
        <dbReference type="ChEBI" id="CHEBI:15378"/>
        <dbReference type="ChEBI" id="CHEBI:29999"/>
        <dbReference type="ChEBI" id="CHEBI:30616"/>
        <dbReference type="ChEBI" id="CHEBI:83421"/>
        <dbReference type="ChEBI" id="CHEBI:456216"/>
        <dbReference type="EC" id="2.7.11.1"/>
    </reaction>
</comment>
<comment type="catalytic activity">
    <reaction>
        <text>L-threonyl-[protein] + ATP = O-phospho-L-threonyl-[protein] + ADP + H(+)</text>
        <dbReference type="Rhea" id="RHEA:46608"/>
        <dbReference type="Rhea" id="RHEA-COMP:11060"/>
        <dbReference type="Rhea" id="RHEA-COMP:11605"/>
        <dbReference type="ChEBI" id="CHEBI:15378"/>
        <dbReference type="ChEBI" id="CHEBI:30013"/>
        <dbReference type="ChEBI" id="CHEBI:30616"/>
        <dbReference type="ChEBI" id="CHEBI:61977"/>
        <dbReference type="ChEBI" id="CHEBI:456216"/>
        <dbReference type="EC" id="2.7.11.1"/>
    </reaction>
</comment>
<comment type="subcellular location">
    <subcellularLocation>
        <location evidence="1">Cell membrane</location>
        <topology evidence="1">Single-pass type I membrane protein</topology>
    </subcellularLocation>
</comment>
<comment type="similarity">
    <text evidence="4">Belongs to the protein kinase superfamily. Ser/Thr protein kinase family.</text>
</comment>
<comment type="sequence caution" evidence="6">
    <conflict type="erroneous gene model prediction">
        <sequence resource="EMBL-CDS" id="AAD27909"/>
    </conflict>
</comment>
<comment type="sequence caution" evidence="6">
    <conflict type="erroneous gene model prediction">
        <sequence resource="EMBL-CDS" id="AEC05819"/>
    </conflict>
</comment>
<dbReference type="EC" id="2.7.11.1"/>
<dbReference type="EMBL" id="AC007213">
    <property type="protein sequence ID" value="AAD27909.1"/>
    <property type="status" value="ALT_SEQ"/>
    <property type="molecule type" value="Genomic_DNA"/>
</dbReference>
<dbReference type="EMBL" id="CP002685">
    <property type="protein sequence ID" value="AEC05819.1"/>
    <property type="status" value="ALT_SEQ"/>
    <property type="molecule type" value="Genomic_DNA"/>
</dbReference>
<dbReference type="EMBL" id="CP002685">
    <property type="protein sequence ID" value="ANM62529.1"/>
    <property type="molecule type" value="Genomic_DNA"/>
</dbReference>
<dbReference type="PIR" id="H84455">
    <property type="entry name" value="H84455"/>
</dbReference>
<dbReference type="RefSeq" id="NP_001324680.1">
    <property type="nucleotide sequence ID" value="NM_001335227.1"/>
</dbReference>
<dbReference type="RefSeq" id="NP_178510.1">
    <property type="nucleotide sequence ID" value="NM_126462.1"/>
</dbReference>
<dbReference type="SMR" id="Q9SI06"/>
<dbReference type="GlyGen" id="Q9SI06">
    <property type="glycosylation" value="11 sites"/>
</dbReference>
<dbReference type="iPTMnet" id="Q9SI06"/>
<dbReference type="PaxDb" id="3702-AT2G04300.1"/>
<dbReference type="EnsemblPlants" id="AT2G04300.2">
    <property type="protein sequence ID" value="AT2G04300.2"/>
    <property type="gene ID" value="AT2G04300"/>
</dbReference>
<dbReference type="GeneID" id="814968"/>
<dbReference type="Gramene" id="AT2G04300.2">
    <property type="protein sequence ID" value="AT2G04300.2"/>
    <property type="gene ID" value="AT2G04300"/>
</dbReference>
<dbReference type="KEGG" id="ath:AT2G04300"/>
<dbReference type="Araport" id="AT2G04300"/>
<dbReference type="TAIR" id="AT2G04300"/>
<dbReference type="eggNOG" id="ENOG502QQCZ">
    <property type="taxonomic scope" value="Eukaryota"/>
</dbReference>
<dbReference type="InParanoid" id="Q9SI06"/>
<dbReference type="OMA" id="IAPGIQN"/>
<dbReference type="PhylomeDB" id="Q9SI06"/>
<dbReference type="PRO" id="PR:Q9SI06"/>
<dbReference type="Proteomes" id="UP000006548">
    <property type="component" value="Chromosome 2"/>
</dbReference>
<dbReference type="GO" id="GO:0005886">
    <property type="term" value="C:plasma membrane"/>
    <property type="evidence" value="ECO:0007669"/>
    <property type="project" value="UniProtKB-SubCell"/>
</dbReference>
<dbReference type="GO" id="GO:0005524">
    <property type="term" value="F:ATP binding"/>
    <property type="evidence" value="ECO:0007669"/>
    <property type="project" value="UniProtKB-KW"/>
</dbReference>
<dbReference type="GO" id="GO:0106310">
    <property type="term" value="F:protein serine kinase activity"/>
    <property type="evidence" value="ECO:0007669"/>
    <property type="project" value="RHEA"/>
</dbReference>
<dbReference type="GO" id="GO:0004674">
    <property type="term" value="F:protein serine/threonine kinase activity"/>
    <property type="evidence" value="ECO:0007669"/>
    <property type="project" value="UniProtKB-KW"/>
</dbReference>
<dbReference type="CDD" id="cd14066">
    <property type="entry name" value="STKc_IRAK"/>
    <property type="match status" value="1"/>
</dbReference>
<dbReference type="FunFam" id="3.80.10.10:FF:000129">
    <property type="entry name" value="Leucine-rich repeat receptor-like kinase"/>
    <property type="match status" value="1"/>
</dbReference>
<dbReference type="FunFam" id="3.30.200.20:FF:000394">
    <property type="entry name" value="Leucine-rich repeat receptor-like protein kinase"/>
    <property type="match status" value="1"/>
</dbReference>
<dbReference type="FunFam" id="1.10.510.10:FF:000146">
    <property type="entry name" value="LRR receptor-like serine/threonine-protein kinase IOS1"/>
    <property type="match status" value="1"/>
</dbReference>
<dbReference type="Gene3D" id="3.30.200.20">
    <property type="entry name" value="Phosphorylase Kinase, domain 1"/>
    <property type="match status" value="1"/>
</dbReference>
<dbReference type="Gene3D" id="3.80.10.10">
    <property type="entry name" value="Ribonuclease Inhibitor"/>
    <property type="match status" value="1"/>
</dbReference>
<dbReference type="Gene3D" id="1.10.510.10">
    <property type="entry name" value="Transferase(Phosphotransferase) domain 1"/>
    <property type="match status" value="1"/>
</dbReference>
<dbReference type="InterPro" id="IPR011009">
    <property type="entry name" value="Kinase-like_dom_sf"/>
</dbReference>
<dbReference type="InterPro" id="IPR001611">
    <property type="entry name" value="Leu-rich_rpt"/>
</dbReference>
<dbReference type="InterPro" id="IPR032675">
    <property type="entry name" value="LRR_dom_sf"/>
</dbReference>
<dbReference type="InterPro" id="IPR024788">
    <property type="entry name" value="Malectin-like_Carb-bd_dom"/>
</dbReference>
<dbReference type="InterPro" id="IPR000719">
    <property type="entry name" value="Prot_kinase_dom"/>
</dbReference>
<dbReference type="InterPro" id="IPR017441">
    <property type="entry name" value="Protein_kinase_ATP_BS"/>
</dbReference>
<dbReference type="InterPro" id="IPR001245">
    <property type="entry name" value="Ser-Thr/Tyr_kinase_cat_dom"/>
</dbReference>
<dbReference type="InterPro" id="IPR008271">
    <property type="entry name" value="Ser/Thr_kinase_AS"/>
</dbReference>
<dbReference type="PANTHER" id="PTHR45631">
    <property type="entry name" value="OS07G0107800 PROTEIN-RELATED"/>
    <property type="match status" value="1"/>
</dbReference>
<dbReference type="PANTHER" id="PTHR45631:SF59">
    <property type="entry name" value="PROTEIN KINASE DOMAIN-CONTAINING PROTEIN"/>
    <property type="match status" value="1"/>
</dbReference>
<dbReference type="Pfam" id="PF13855">
    <property type="entry name" value="LRR_8"/>
    <property type="match status" value="1"/>
</dbReference>
<dbReference type="Pfam" id="PF12819">
    <property type="entry name" value="Malectin_like"/>
    <property type="match status" value="1"/>
</dbReference>
<dbReference type="Pfam" id="PF07714">
    <property type="entry name" value="PK_Tyr_Ser-Thr"/>
    <property type="match status" value="1"/>
</dbReference>
<dbReference type="SMART" id="SM00220">
    <property type="entry name" value="S_TKc"/>
    <property type="match status" value="1"/>
</dbReference>
<dbReference type="SUPFAM" id="SSF52058">
    <property type="entry name" value="L domain-like"/>
    <property type="match status" value="1"/>
</dbReference>
<dbReference type="SUPFAM" id="SSF56112">
    <property type="entry name" value="Protein kinase-like (PK-like)"/>
    <property type="match status" value="1"/>
</dbReference>
<dbReference type="PROSITE" id="PS00107">
    <property type="entry name" value="PROTEIN_KINASE_ATP"/>
    <property type="match status" value="1"/>
</dbReference>
<dbReference type="PROSITE" id="PS50011">
    <property type="entry name" value="PROTEIN_KINASE_DOM"/>
    <property type="match status" value="1"/>
</dbReference>
<dbReference type="PROSITE" id="PS00108">
    <property type="entry name" value="PROTEIN_KINASE_ST"/>
    <property type="match status" value="1"/>
</dbReference>